<sequence>MKNSSSMLKGVKSFIGSGIYTNKPIYDVAIVGGGIVGLATGRELLKRNPKLKIVILEKENEIAPHQSSHNSGVIHCGIYYKPGSLRAKLCTKGSKLMYDYCNENQINYENCGKLIVATKKEEFQQLEQLYKRGIENGVPNIKLLESKEQLLSIEPFINGGLRAIHTPSTGIIDYKEVSKSFGNDITEKFGKDSKSEIKLNFNAKNFKYNSNDKLLLISTGDDDDDEEQQQSILTKYSIVCGGMNSDRIAKVAYGNDEPSIVPFRGSFLQFKPEFRHLIKGNVYPLPNASFPFLGVHFTKRINGEVWLGPNAVLSFDREGYKFTDFNLHDTIDLIKNPGLFKLAKKHWKYGLGELYRDFNKDHFIQLLKPYMPNITVDMLEYGGSGVRSQAISKSGDLIEDFIFDTPSDVPIIHVRNSPSPAATSSLAIAIEIVDLAQNNFKNLNSL</sequence>
<organism>
    <name type="scientific">Dictyostelium discoideum</name>
    <name type="common">Social amoeba</name>
    <dbReference type="NCBI Taxonomy" id="44689"/>
    <lineage>
        <taxon>Eukaryota</taxon>
        <taxon>Amoebozoa</taxon>
        <taxon>Evosea</taxon>
        <taxon>Eumycetozoa</taxon>
        <taxon>Dictyostelia</taxon>
        <taxon>Dictyosteliales</taxon>
        <taxon>Dictyosteliaceae</taxon>
        <taxon>Dictyostelium</taxon>
    </lineage>
</organism>
<reference key="1">
    <citation type="journal article" date="2005" name="Nature">
        <title>The genome of the social amoeba Dictyostelium discoideum.</title>
        <authorList>
            <person name="Eichinger L."/>
            <person name="Pachebat J.A."/>
            <person name="Gloeckner G."/>
            <person name="Rajandream M.A."/>
            <person name="Sucgang R."/>
            <person name="Berriman M."/>
            <person name="Song J."/>
            <person name="Olsen R."/>
            <person name="Szafranski K."/>
            <person name="Xu Q."/>
            <person name="Tunggal B."/>
            <person name="Kummerfeld S."/>
            <person name="Madera M."/>
            <person name="Konfortov B.A."/>
            <person name="Rivero F."/>
            <person name="Bankier A.T."/>
            <person name="Lehmann R."/>
            <person name="Hamlin N."/>
            <person name="Davies R."/>
            <person name="Gaudet P."/>
            <person name="Fey P."/>
            <person name="Pilcher K."/>
            <person name="Chen G."/>
            <person name="Saunders D."/>
            <person name="Sodergren E.J."/>
            <person name="Davis P."/>
            <person name="Kerhornou A."/>
            <person name="Nie X."/>
            <person name="Hall N."/>
            <person name="Anjard C."/>
            <person name="Hemphill L."/>
            <person name="Bason N."/>
            <person name="Farbrother P."/>
            <person name="Desany B."/>
            <person name="Just E."/>
            <person name="Morio T."/>
            <person name="Rost R."/>
            <person name="Churcher C.M."/>
            <person name="Cooper J."/>
            <person name="Haydock S."/>
            <person name="van Driessche N."/>
            <person name="Cronin A."/>
            <person name="Goodhead I."/>
            <person name="Muzny D.M."/>
            <person name="Mourier T."/>
            <person name="Pain A."/>
            <person name="Lu M."/>
            <person name="Harper D."/>
            <person name="Lindsay R."/>
            <person name="Hauser H."/>
            <person name="James K.D."/>
            <person name="Quiles M."/>
            <person name="Madan Babu M."/>
            <person name="Saito T."/>
            <person name="Buchrieser C."/>
            <person name="Wardroper A."/>
            <person name="Felder M."/>
            <person name="Thangavelu M."/>
            <person name="Johnson D."/>
            <person name="Knights A."/>
            <person name="Loulseged H."/>
            <person name="Mungall K.L."/>
            <person name="Oliver K."/>
            <person name="Price C."/>
            <person name="Quail M.A."/>
            <person name="Urushihara H."/>
            <person name="Hernandez J."/>
            <person name="Rabbinowitsch E."/>
            <person name="Steffen D."/>
            <person name="Sanders M."/>
            <person name="Ma J."/>
            <person name="Kohara Y."/>
            <person name="Sharp S."/>
            <person name="Simmonds M.N."/>
            <person name="Spiegler S."/>
            <person name="Tivey A."/>
            <person name="Sugano S."/>
            <person name="White B."/>
            <person name="Walker D."/>
            <person name="Woodward J.R."/>
            <person name="Winckler T."/>
            <person name="Tanaka Y."/>
            <person name="Shaulsky G."/>
            <person name="Schleicher M."/>
            <person name="Weinstock G.M."/>
            <person name="Rosenthal A."/>
            <person name="Cox E.C."/>
            <person name="Chisholm R.L."/>
            <person name="Gibbs R.A."/>
            <person name="Loomis W.F."/>
            <person name="Platzer M."/>
            <person name="Kay R.R."/>
            <person name="Williams J.G."/>
            <person name="Dear P.H."/>
            <person name="Noegel A.A."/>
            <person name="Barrell B.G."/>
            <person name="Kuspa A."/>
        </authorList>
    </citation>
    <scope>NUCLEOTIDE SEQUENCE [LARGE SCALE GENOMIC DNA]</scope>
    <source>
        <strain>AX4</strain>
    </source>
</reference>
<protein>
    <recommendedName>
        <fullName>L-2-hydroxyglutarate dehydrogenase, mitochondrial</fullName>
        <ecNumber>1.1.99.2</ecNumber>
    </recommendedName>
</protein>
<proteinExistence type="inferred from homology"/>
<keyword id="KW-0274">FAD</keyword>
<keyword id="KW-0285">Flavoprotein</keyword>
<keyword id="KW-0496">Mitochondrion</keyword>
<keyword id="KW-0560">Oxidoreductase</keyword>
<keyword id="KW-1185">Reference proteome</keyword>
<keyword id="KW-0809">Transit peptide</keyword>
<dbReference type="EC" id="1.1.99.2"/>
<dbReference type="EMBL" id="AAFI02000003">
    <property type="protein sequence ID" value="EAL73281.1"/>
    <property type="molecule type" value="Genomic_DNA"/>
</dbReference>
<dbReference type="RefSeq" id="XP_647199.1">
    <property type="nucleotide sequence ID" value="XM_642107.1"/>
</dbReference>
<dbReference type="SMR" id="Q55GI5"/>
<dbReference type="FunCoup" id="Q55GI5">
    <property type="interactions" value="182"/>
</dbReference>
<dbReference type="STRING" id="44689.Q55GI5"/>
<dbReference type="PaxDb" id="44689-DDB0305262"/>
<dbReference type="EnsemblProtists" id="EAL73281">
    <property type="protein sequence ID" value="EAL73281"/>
    <property type="gene ID" value="DDB_G0267656"/>
</dbReference>
<dbReference type="GeneID" id="8616003"/>
<dbReference type="KEGG" id="ddi:DDB_G0267656"/>
<dbReference type="dictyBase" id="DDB_G0267656">
    <property type="gene designation" value="l2hgdh"/>
</dbReference>
<dbReference type="VEuPathDB" id="AmoebaDB:DDB_G0267656"/>
<dbReference type="eggNOG" id="KOG2665">
    <property type="taxonomic scope" value="Eukaryota"/>
</dbReference>
<dbReference type="HOGENOM" id="CLU_024775_0_0_1"/>
<dbReference type="InParanoid" id="Q55GI5"/>
<dbReference type="OMA" id="SEVTRCM"/>
<dbReference type="PhylomeDB" id="Q55GI5"/>
<dbReference type="Reactome" id="R-DDI-880009">
    <property type="pathway name" value="Interconversion of 2-oxoglutarate and 2-hydroxyglutarate"/>
</dbReference>
<dbReference type="PRO" id="PR:Q55GI5"/>
<dbReference type="Proteomes" id="UP000002195">
    <property type="component" value="Chromosome 1"/>
</dbReference>
<dbReference type="GO" id="GO:0005739">
    <property type="term" value="C:mitochondrion"/>
    <property type="evidence" value="ECO:0007669"/>
    <property type="project" value="UniProtKB-SubCell"/>
</dbReference>
<dbReference type="GO" id="GO:0047545">
    <property type="term" value="F:2-hydroxyglutarate dehydrogenase activity"/>
    <property type="evidence" value="ECO:0000318"/>
    <property type="project" value="GO_Central"/>
</dbReference>
<dbReference type="Gene3D" id="3.30.9.10">
    <property type="entry name" value="D-Amino Acid Oxidase, subunit A, domain 2"/>
    <property type="match status" value="1"/>
</dbReference>
<dbReference type="Gene3D" id="3.50.50.60">
    <property type="entry name" value="FAD/NAD(P)-binding domain"/>
    <property type="match status" value="1"/>
</dbReference>
<dbReference type="InterPro" id="IPR006076">
    <property type="entry name" value="FAD-dep_OxRdtase"/>
</dbReference>
<dbReference type="InterPro" id="IPR036188">
    <property type="entry name" value="FAD/NAD-bd_sf"/>
</dbReference>
<dbReference type="NCBIfam" id="NF008726">
    <property type="entry name" value="PRK11728.1"/>
    <property type="match status" value="1"/>
</dbReference>
<dbReference type="PANTHER" id="PTHR43104">
    <property type="entry name" value="L-2-HYDROXYGLUTARATE DEHYDROGENASE, MITOCHONDRIAL"/>
    <property type="match status" value="1"/>
</dbReference>
<dbReference type="PANTHER" id="PTHR43104:SF2">
    <property type="entry name" value="L-2-HYDROXYGLUTARATE DEHYDROGENASE, MITOCHONDRIAL"/>
    <property type="match status" value="1"/>
</dbReference>
<dbReference type="Pfam" id="PF01266">
    <property type="entry name" value="DAO"/>
    <property type="match status" value="1"/>
</dbReference>
<dbReference type="SUPFAM" id="SSF51905">
    <property type="entry name" value="FAD/NAD(P)-binding domain"/>
    <property type="match status" value="1"/>
</dbReference>
<accession>Q55GI5</accession>
<name>L2HDH_DICDI</name>
<gene>
    <name type="primary">l2hgdh</name>
    <name type="ORF">DDB_G0267656</name>
</gene>
<evidence type="ECO:0000250" key="1"/>
<evidence type="ECO:0000255" key="2"/>
<evidence type="ECO:0000305" key="3"/>
<feature type="transit peptide" description="Mitochondrion" evidence="2">
    <location>
        <begin position="1"/>
        <end position="28"/>
    </location>
</feature>
<feature type="chain" id="PRO_0000331212" description="L-2-hydroxyglutarate dehydrogenase, mitochondrial">
    <location>
        <begin position="29"/>
        <end position="446"/>
    </location>
</feature>
<comment type="catalytic activity">
    <reaction>
        <text>(S)-2-hydroxyglutarate + A = 2-oxoglutarate + AH2</text>
        <dbReference type="Rhea" id="RHEA:21252"/>
        <dbReference type="ChEBI" id="CHEBI:13193"/>
        <dbReference type="ChEBI" id="CHEBI:16782"/>
        <dbReference type="ChEBI" id="CHEBI:16810"/>
        <dbReference type="ChEBI" id="CHEBI:17499"/>
        <dbReference type="EC" id="1.1.99.2"/>
    </reaction>
</comment>
<comment type="cofactor">
    <cofactor evidence="1">
        <name>FAD</name>
        <dbReference type="ChEBI" id="CHEBI:57692"/>
    </cofactor>
</comment>
<comment type="subcellular location">
    <subcellularLocation>
        <location evidence="1">Mitochondrion</location>
    </subcellularLocation>
</comment>
<comment type="similarity">
    <text evidence="3">Belongs to the L2HGDH family.</text>
</comment>